<accession>P0C5Y9</accession>
<accession>A0PK90</accession>
<accession>P98176</accession>
<accession>Q5TZB2</accession>
<accession>Q6FG78</accession>
<accession>Q96PR7</accession>
<keyword id="KW-0158">Chromosome</keyword>
<keyword id="KW-0238">DNA-binding</keyword>
<keyword id="KW-0507">mRNA processing</keyword>
<keyword id="KW-0544">Nucleosome core</keyword>
<keyword id="KW-0539">Nucleus</keyword>
<keyword id="KW-1185">Reference proteome</keyword>
<evidence type="ECO:0000256" key="1">
    <source>
        <dbReference type="SAM" id="MobiDB-lite"/>
    </source>
</evidence>
<evidence type="ECO:0000269" key="2">
    <source>
    </source>
</evidence>
<evidence type="ECO:0000269" key="3">
    <source>
    </source>
</evidence>
<evidence type="ECO:0000269" key="4">
    <source>
    </source>
</evidence>
<evidence type="ECO:0000269" key="5">
    <source>
    </source>
</evidence>
<evidence type="ECO:0000269" key="6">
    <source>
    </source>
</evidence>
<evidence type="ECO:0000269" key="7">
    <source>
    </source>
</evidence>
<evidence type="ECO:0000269" key="8">
    <source>
    </source>
</evidence>
<evidence type="ECO:0000269" key="9">
    <source>
    </source>
</evidence>
<evidence type="ECO:0000269" key="10">
    <source>
    </source>
</evidence>
<evidence type="ECO:0000269" key="11">
    <source>
    </source>
</evidence>
<evidence type="ECO:0000303" key="12">
    <source>
    </source>
</evidence>
<evidence type="ECO:0000303" key="13">
    <source>
    </source>
</evidence>
<evidence type="ECO:0000305" key="14"/>
<evidence type="ECO:0000312" key="15">
    <source>
        <dbReference type="HGNC" id="HGNC:22516"/>
    </source>
</evidence>
<reference key="1">
    <citation type="journal article" date="1995" name="Hum. Mol. Genet.">
        <title>Investigation of the factor VIII intron 22 repeated region (int22h) and the associated inversion junctions.</title>
        <authorList>
            <person name="Naylor J.A."/>
            <person name="Buck D."/>
            <person name="Green P.M."/>
            <person name="Williamson H."/>
            <person name="Bentley D."/>
            <person name="Giannelli F."/>
        </authorList>
    </citation>
    <scope>NUCLEOTIDE SEQUENCE [GENOMIC DNA]</scope>
</reference>
<reference key="2">
    <citation type="submission" date="2004-06" db="EMBL/GenBank/DDBJ databases">
        <title>Cloning of human full open reading frames in Gateway(TM) system entry vector (pDONR201).</title>
        <authorList>
            <person name="Ebert L."/>
            <person name="Schick M."/>
            <person name="Neubert P."/>
            <person name="Schatten R."/>
            <person name="Henze S."/>
            <person name="Korn B."/>
        </authorList>
    </citation>
    <scope>NUCLEOTIDE SEQUENCE [LARGE SCALE MRNA]</scope>
</reference>
<reference key="3">
    <citation type="journal article" date="2005" name="Nature">
        <title>The DNA sequence of the human X chromosome.</title>
        <authorList>
            <person name="Ross M.T."/>
            <person name="Grafham D.V."/>
            <person name="Coffey A.J."/>
            <person name="Scherer S."/>
            <person name="McLay K."/>
            <person name="Muzny D."/>
            <person name="Platzer M."/>
            <person name="Howell G.R."/>
            <person name="Burrows C."/>
            <person name="Bird C.P."/>
            <person name="Frankish A."/>
            <person name="Lovell F.L."/>
            <person name="Howe K.L."/>
            <person name="Ashurst J.L."/>
            <person name="Fulton R.S."/>
            <person name="Sudbrak R."/>
            <person name="Wen G."/>
            <person name="Jones M.C."/>
            <person name="Hurles M.E."/>
            <person name="Andrews T.D."/>
            <person name="Scott C.E."/>
            <person name="Searle S."/>
            <person name="Ramser J."/>
            <person name="Whittaker A."/>
            <person name="Deadman R."/>
            <person name="Carter N.P."/>
            <person name="Hunt S.E."/>
            <person name="Chen R."/>
            <person name="Cree A."/>
            <person name="Gunaratne P."/>
            <person name="Havlak P."/>
            <person name="Hodgson A."/>
            <person name="Metzker M.L."/>
            <person name="Richards S."/>
            <person name="Scott G."/>
            <person name="Steffen D."/>
            <person name="Sodergren E."/>
            <person name="Wheeler D.A."/>
            <person name="Worley K.C."/>
            <person name="Ainscough R."/>
            <person name="Ambrose K.D."/>
            <person name="Ansari-Lari M.A."/>
            <person name="Aradhya S."/>
            <person name="Ashwell R.I."/>
            <person name="Babbage A.K."/>
            <person name="Bagguley C.L."/>
            <person name="Ballabio A."/>
            <person name="Banerjee R."/>
            <person name="Barker G.E."/>
            <person name="Barlow K.F."/>
            <person name="Barrett I.P."/>
            <person name="Bates K.N."/>
            <person name="Beare D.M."/>
            <person name="Beasley H."/>
            <person name="Beasley O."/>
            <person name="Beck A."/>
            <person name="Bethel G."/>
            <person name="Blechschmidt K."/>
            <person name="Brady N."/>
            <person name="Bray-Allen S."/>
            <person name="Bridgeman A.M."/>
            <person name="Brown A.J."/>
            <person name="Brown M.J."/>
            <person name="Bonnin D."/>
            <person name="Bruford E.A."/>
            <person name="Buhay C."/>
            <person name="Burch P."/>
            <person name="Burford D."/>
            <person name="Burgess J."/>
            <person name="Burrill W."/>
            <person name="Burton J."/>
            <person name="Bye J.M."/>
            <person name="Carder C."/>
            <person name="Carrel L."/>
            <person name="Chako J."/>
            <person name="Chapman J.C."/>
            <person name="Chavez D."/>
            <person name="Chen E."/>
            <person name="Chen G."/>
            <person name="Chen Y."/>
            <person name="Chen Z."/>
            <person name="Chinault C."/>
            <person name="Ciccodicola A."/>
            <person name="Clark S.Y."/>
            <person name="Clarke G."/>
            <person name="Clee C.M."/>
            <person name="Clegg S."/>
            <person name="Clerc-Blankenburg K."/>
            <person name="Clifford K."/>
            <person name="Cobley V."/>
            <person name="Cole C.G."/>
            <person name="Conquer J.S."/>
            <person name="Corby N."/>
            <person name="Connor R.E."/>
            <person name="David R."/>
            <person name="Davies J."/>
            <person name="Davis C."/>
            <person name="Davis J."/>
            <person name="Delgado O."/>
            <person name="Deshazo D."/>
            <person name="Dhami P."/>
            <person name="Ding Y."/>
            <person name="Dinh H."/>
            <person name="Dodsworth S."/>
            <person name="Draper H."/>
            <person name="Dugan-Rocha S."/>
            <person name="Dunham A."/>
            <person name="Dunn M."/>
            <person name="Durbin K.J."/>
            <person name="Dutta I."/>
            <person name="Eades T."/>
            <person name="Ellwood M."/>
            <person name="Emery-Cohen A."/>
            <person name="Errington H."/>
            <person name="Evans K.L."/>
            <person name="Faulkner L."/>
            <person name="Francis F."/>
            <person name="Frankland J."/>
            <person name="Fraser A.E."/>
            <person name="Galgoczy P."/>
            <person name="Gilbert J."/>
            <person name="Gill R."/>
            <person name="Gloeckner G."/>
            <person name="Gregory S.G."/>
            <person name="Gribble S."/>
            <person name="Griffiths C."/>
            <person name="Grocock R."/>
            <person name="Gu Y."/>
            <person name="Gwilliam R."/>
            <person name="Hamilton C."/>
            <person name="Hart E.A."/>
            <person name="Hawes A."/>
            <person name="Heath P.D."/>
            <person name="Heitmann K."/>
            <person name="Hennig S."/>
            <person name="Hernandez J."/>
            <person name="Hinzmann B."/>
            <person name="Ho S."/>
            <person name="Hoffs M."/>
            <person name="Howden P.J."/>
            <person name="Huckle E.J."/>
            <person name="Hume J."/>
            <person name="Hunt P.J."/>
            <person name="Hunt A.R."/>
            <person name="Isherwood J."/>
            <person name="Jacob L."/>
            <person name="Johnson D."/>
            <person name="Jones S."/>
            <person name="de Jong P.J."/>
            <person name="Joseph S.S."/>
            <person name="Keenan S."/>
            <person name="Kelly S."/>
            <person name="Kershaw J.K."/>
            <person name="Khan Z."/>
            <person name="Kioschis P."/>
            <person name="Klages S."/>
            <person name="Knights A.J."/>
            <person name="Kosiura A."/>
            <person name="Kovar-Smith C."/>
            <person name="Laird G.K."/>
            <person name="Langford C."/>
            <person name="Lawlor S."/>
            <person name="Leversha M."/>
            <person name="Lewis L."/>
            <person name="Liu W."/>
            <person name="Lloyd C."/>
            <person name="Lloyd D.M."/>
            <person name="Loulseged H."/>
            <person name="Loveland J.E."/>
            <person name="Lovell J.D."/>
            <person name="Lozado R."/>
            <person name="Lu J."/>
            <person name="Lyne R."/>
            <person name="Ma J."/>
            <person name="Maheshwari M."/>
            <person name="Matthews L.H."/>
            <person name="McDowall J."/>
            <person name="McLaren S."/>
            <person name="McMurray A."/>
            <person name="Meidl P."/>
            <person name="Meitinger T."/>
            <person name="Milne S."/>
            <person name="Miner G."/>
            <person name="Mistry S.L."/>
            <person name="Morgan M."/>
            <person name="Morris S."/>
            <person name="Mueller I."/>
            <person name="Mullikin J.C."/>
            <person name="Nguyen N."/>
            <person name="Nordsiek G."/>
            <person name="Nyakatura G."/>
            <person name="O'dell C.N."/>
            <person name="Okwuonu G."/>
            <person name="Palmer S."/>
            <person name="Pandian R."/>
            <person name="Parker D."/>
            <person name="Parrish J."/>
            <person name="Pasternak S."/>
            <person name="Patel D."/>
            <person name="Pearce A.V."/>
            <person name="Pearson D.M."/>
            <person name="Pelan S.E."/>
            <person name="Perez L."/>
            <person name="Porter K.M."/>
            <person name="Ramsey Y."/>
            <person name="Reichwald K."/>
            <person name="Rhodes S."/>
            <person name="Ridler K.A."/>
            <person name="Schlessinger D."/>
            <person name="Schueler M.G."/>
            <person name="Sehra H.K."/>
            <person name="Shaw-Smith C."/>
            <person name="Shen H."/>
            <person name="Sheridan E.M."/>
            <person name="Shownkeen R."/>
            <person name="Skuce C.D."/>
            <person name="Smith M.L."/>
            <person name="Sotheran E.C."/>
            <person name="Steingruber H.E."/>
            <person name="Steward C.A."/>
            <person name="Storey R."/>
            <person name="Swann R.M."/>
            <person name="Swarbreck D."/>
            <person name="Tabor P.E."/>
            <person name="Taudien S."/>
            <person name="Taylor T."/>
            <person name="Teague B."/>
            <person name="Thomas K."/>
            <person name="Thorpe A."/>
            <person name="Timms K."/>
            <person name="Tracey A."/>
            <person name="Trevanion S."/>
            <person name="Tromans A.C."/>
            <person name="d'Urso M."/>
            <person name="Verduzco D."/>
            <person name="Villasana D."/>
            <person name="Waldron L."/>
            <person name="Wall M."/>
            <person name="Wang Q."/>
            <person name="Warren J."/>
            <person name="Warry G.L."/>
            <person name="Wei X."/>
            <person name="West A."/>
            <person name="Whitehead S.L."/>
            <person name="Whiteley M.N."/>
            <person name="Wilkinson J.E."/>
            <person name="Willey D.L."/>
            <person name="Williams G."/>
            <person name="Williams L."/>
            <person name="Williamson A."/>
            <person name="Williamson H."/>
            <person name="Wilming L."/>
            <person name="Woodmansey R.L."/>
            <person name="Wray P.W."/>
            <person name="Yen J."/>
            <person name="Zhang J."/>
            <person name="Zhou J."/>
            <person name="Zoghbi H."/>
            <person name="Zorilla S."/>
            <person name="Buck D."/>
            <person name="Reinhardt R."/>
            <person name="Poustka A."/>
            <person name="Rosenthal A."/>
            <person name="Lehrach H."/>
            <person name="Meindl A."/>
            <person name="Minx P.J."/>
            <person name="Hillier L.W."/>
            <person name="Willard H.F."/>
            <person name="Wilson R.K."/>
            <person name="Waterston R.H."/>
            <person name="Rice C.M."/>
            <person name="Vaudin M."/>
            <person name="Coulson A."/>
            <person name="Nelson D.L."/>
            <person name="Weinstock G."/>
            <person name="Sulston J.E."/>
            <person name="Durbin R.M."/>
            <person name="Hubbard T."/>
            <person name="Gibbs R.A."/>
            <person name="Beck S."/>
            <person name="Rogers J."/>
            <person name="Bentley D.R."/>
        </authorList>
    </citation>
    <scope>NUCLEOTIDE SEQUENCE [LARGE SCALE GENOMIC DNA]</scope>
</reference>
<reference key="4">
    <citation type="journal article" date="2004" name="Genome Res.">
        <title>The status, quality, and expansion of the NIH full-length cDNA project: the Mammalian Gene Collection (MGC).</title>
        <authorList>
            <consortium name="The MGC Project Team"/>
        </authorList>
    </citation>
    <scope>NUCLEOTIDE SEQUENCE [LARGE SCALE MRNA]</scope>
</reference>
<reference key="5">
    <citation type="journal article" date="2004" name="EMBO J.">
        <title>Nucleosomes containing the histone variant H2A.Bbd organize only 118 base pairs of DNA.</title>
        <authorList>
            <person name="Bao Y."/>
            <person name="Konesky K."/>
            <person name="Park Y.-J."/>
            <person name="Rosu S."/>
            <person name="Dyer P.N."/>
            <person name="Rangasamy D."/>
            <person name="Tremethick D.J."/>
            <person name="Laybourn P.J."/>
            <person name="Luger K."/>
        </authorList>
    </citation>
    <scope>FUNCTION</scope>
    <scope>DOMAIN</scope>
    <scope>SUBUNIT</scope>
</reference>
<reference key="6">
    <citation type="journal article" date="2005" name="Mol. Cell. Biol.">
        <title>Assembly and disassembly of nucleosome core particles containing histone variants by human nucleosome assembly protein I.</title>
        <authorList>
            <person name="Okuwaki M."/>
            <person name="Kato K."/>
            <person name="Shimahara H."/>
            <person name="Tate S."/>
            <person name="Nagata K."/>
        </authorList>
    </citation>
    <scope>FUNCTION</scope>
</reference>
<reference key="7">
    <citation type="journal article" date="2006" name="EMBO J.">
        <title>Dissection of the unusual structural and functional properties of the variant H2A.Bbd nucleosome.</title>
        <authorList>
            <person name="Doyen C.M."/>
            <person name="Montel F."/>
            <person name="Gautier T."/>
            <person name="Menoni H."/>
            <person name="Claudet C."/>
            <person name="Delacour-Larose M."/>
            <person name="Angelov D."/>
            <person name="Hamiche A."/>
            <person name="Bednar J."/>
            <person name="Faivre-Moskalenko C."/>
            <person name="Bouvet P."/>
            <person name="Dimitrov S."/>
        </authorList>
    </citation>
    <scope>FUNCTION</scope>
    <scope>SUBUNIT</scope>
</reference>
<reference key="8">
    <citation type="journal article" date="2007" name="Mol. Cell. Biol.">
        <title>ATP-dependent chromatin remodeling is required for base excision repair in conventional but not in variant H2A.Bbd nucleosomes.</title>
        <authorList>
            <person name="Menoni H."/>
            <person name="Gasparutto D."/>
            <person name="Hamiche A."/>
            <person name="Cadet J."/>
            <person name="Dimitrov S."/>
            <person name="Bouvet P."/>
            <person name="Angelov D."/>
        </authorList>
    </citation>
    <scope>FUNCTION</scope>
</reference>
<reference key="9">
    <citation type="journal article" date="2008" name="FASEB J.">
        <title>H2A.Bbd: a quickly evolving hypervariable mammalian histone that destabilizes nucleosomes in an acetylation-independent way.</title>
        <authorList>
            <person name="Eirin-Lopez J.M."/>
            <person name="Ishibashi T."/>
            <person name="Ausio J."/>
        </authorList>
    </citation>
    <scope>FUNCTION</scope>
</reference>
<reference key="10">
    <citation type="journal article" date="2008" name="Gene">
        <title>Quickly evolving histones, nucleosome stability and chromatin folding: all about histone H2A.Bbd.</title>
        <authorList>
            <person name="Gonzalez-Romero R."/>
            <person name="Mendez J."/>
            <person name="Ausio J."/>
            <person name="Eirin-Lopez J.M."/>
        </authorList>
    </citation>
    <scope>FUNCTION</scope>
</reference>
<reference key="11">
    <citation type="journal article" date="2010" name="Nucleic Acids Res.">
        <title>H2A.Bbd: an X-chromosome-encoded histone involved in mammalian spermiogenesis.</title>
        <authorList>
            <person name="Ishibashi T."/>
            <person name="Li A."/>
            <person name="Eirin-Lopez J.M."/>
            <person name="Zhao M."/>
            <person name="Missiaen K."/>
            <person name="Abbott D.W."/>
            <person name="Meistrich M."/>
            <person name="Hendzel M.J."/>
            <person name="Ausio J."/>
        </authorList>
    </citation>
    <scope>SUBCELLULAR LOCATION</scope>
    <scope>TISSUE SPECIFICITY</scope>
</reference>
<reference key="12">
    <citation type="journal article" date="2012" name="Mol. Cell">
        <title>Histone variant H2A.Bbd is associated with active transcription and mRNA processing in human cells.</title>
        <authorList>
            <person name="Tolstorukov M.Y."/>
            <person name="Goldman J.A."/>
            <person name="Gilbert C."/>
            <person name="Ogryzko V."/>
            <person name="Kingston R.E."/>
            <person name="Park P.J."/>
        </authorList>
    </citation>
    <scope>FUNCTION</scope>
    <scope>SUBCELLULAR LOCATION</scope>
</reference>
<reference key="13">
    <citation type="journal article" date="2014" name="Nucleic Acids Res.">
        <title>The histone variant H2A.Bbd is enriched at sites of DNA synthesis.</title>
        <authorList>
            <person name="Sansoni V."/>
            <person name="Casas-Delucchi C.S."/>
            <person name="Rajan M."/>
            <person name="Schmidt A."/>
            <person name="Boenisch C."/>
            <person name="Thomae A.W."/>
            <person name="Staege M.S."/>
            <person name="Hake S.B."/>
            <person name="Cardoso M.C."/>
            <person name="Imhof A."/>
        </authorList>
    </citation>
    <scope>FUNCTION</scope>
</reference>
<reference key="14">
    <citation type="journal article" date="2013" name="Sci. Rep.">
        <title>Structural basis of a nucleosome containing histone H2A.B/H2A.Bbd that transiently associates with reorganized chromatin.</title>
        <authorList>
            <person name="Arimura Y."/>
            <person name="Kimura H."/>
            <person name="Oda T."/>
            <person name="Sato K."/>
            <person name="Osakabe A."/>
            <person name="Tachiwana H."/>
            <person name="Sato Y."/>
            <person name="Kinugasa Y."/>
            <person name="Ikura T."/>
            <person name="Sugiyama M."/>
            <person name="Sato M."/>
            <person name="Kurumizaka H."/>
        </authorList>
    </citation>
    <scope>FUNCTION</scope>
    <scope>SUBCELLULAR LOCATION</scope>
    <scope>SUBUNIT</scope>
</reference>
<reference key="15">
    <citation type="journal article" date="2015" name="Sci. Rep.">
        <title>Corrigendum: Structural basis of a nucleosome containing histone H2A.B/H2A.Bbd that transiently associates with reorganized chromatin.</title>
        <authorList>
            <person name="Arimura Y."/>
            <person name="Kimura H."/>
            <person name="Oda T."/>
            <person name="Sato K."/>
            <person name="Osakabe A."/>
            <person name="Tachiwana H."/>
            <person name="Sato Y."/>
            <person name="Kinugasa Y."/>
            <person name="Ikura T."/>
            <person name="Sugiyama M."/>
            <person name="Sato M."/>
            <person name="Kurumizaka H."/>
        </authorList>
    </citation>
    <scope>ERRATUM OF PUBMED:24336483</scope>
</reference>
<dbReference type="EMBL" id="X86012">
    <property type="protein sequence ID" value="CAA59998.1"/>
    <property type="molecule type" value="Genomic_DNA"/>
</dbReference>
<dbReference type="EMBL" id="CR542230">
    <property type="protein sequence ID" value="CAG47026.1"/>
    <property type="molecule type" value="mRNA"/>
</dbReference>
<dbReference type="EMBL" id="BX842559">
    <property type="status" value="NOT_ANNOTATED_CDS"/>
    <property type="molecule type" value="Genomic_DNA"/>
</dbReference>
<dbReference type="EMBL" id="BC128034">
    <property type="protein sequence ID" value="AAI28035.1"/>
    <property type="molecule type" value="mRNA"/>
</dbReference>
<dbReference type="CCDS" id="CCDS35458.1"/>
<dbReference type="PIR" id="I37901">
    <property type="entry name" value="I37901"/>
</dbReference>
<dbReference type="RefSeq" id="NP_001017990.1">
    <property type="nucleotide sequence ID" value="NM_001017990.2"/>
</dbReference>
<dbReference type="SMR" id="P0C5Y9"/>
<dbReference type="BioGRID" id="138883">
    <property type="interactions" value="25"/>
</dbReference>
<dbReference type="FunCoup" id="P0C5Y9">
    <property type="interactions" value="63"/>
</dbReference>
<dbReference type="IntAct" id="P0C5Y9">
    <property type="interactions" value="19"/>
</dbReference>
<dbReference type="STRING" id="9606.ENSP00000484261"/>
<dbReference type="iPTMnet" id="P0C5Y9"/>
<dbReference type="PhosphoSitePlus" id="P0C5Y9"/>
<dbReference type="BioMuta" id="H2AFB1"/>
<dbReference type="DMDM" id="161784332"/>
<dbReference type="jPOST" id="P0C5Y9"/>
<dbReference type="MassIVE" id="P0C5Y9"/>
<dbReference type="PaxDb" id="9606-ENSP00000484261"/>
<dbReference type="PeptideAtlas" id="P0C5Y9"/>
<dbReference type="ProteomicsDB" id="52313"/>
<dbReference type="Antibodypedia" id="74717">
    <property type="antibodies" value="52 antibodies from 13 providers"/>
</dbReference>
<dbReference type="DNASU" id="474382"/>
<dbReference type="Ensembl" id="ENST00000620016.2">
    <property type="protein sequence ID" value="ENSP00000484261.2"/>
    <property type="gene ID" value="ENSG00000274183.2"/>
</dbReference>
<dbReference type="GeneID" id="474382"/>
<dbReference type="KEGG" id="hsa:474382"/>
<dbReference type="MANE-Select" id="ENST00000620016.2">
    <property type="protein sequence ID" value="ENSP00000484261.2"/>
    <property type="RefSeq nucleotide sequence ID" value="NM_001017990.2"/>
    <property type="RefSeq protein sequence ID" value="NP_001017990.1"/>
</dbReference>
<dbReference type="UCSC" id="uc004fmu.5">
    <property type="organism name" value="human"/>
</dbReference>
<dbReference type="AGR" id="HGNC:22516"/>
<dbReference type="CTD" id="474382"/>
<dbReference type="DisGeNET" id="474382"/>
<dbReference type="GeneCards" id="H2AB1"/>
<dbReference type="HGNC" id="HGNC:22516">
    <property type="gene designation" value="H2AB1"/>
</dbReference>
<dbReference type="HPA" id="ENSG00000274183">
    <property type="expression patterns" value="Tissue enriched (testis)"/>
</dbReference>
<dbReference type="MIM" id="301037">
    <property type="type" value="gene"/>
</dbReference>
<dbReference type="neXtProt" id="NX_P0C5Y9"/>
<dbReference type="VEuPathDB" id="HostDB:ENSG00000274183"/>
<dbReference type="eggNOG" id="KOG1756">
    <property type="taxonomic scope" value="Eukaryota"/>
</dbReference>
<dbReference type="GeneTree" id="ENSGT00940000163020"/>
<dbReference type="HOGENOM" id="CLU_062828_3_2_1"/>
<dbReference type="InParanoid" id="P0C5Y9"/>
<dbReference type="OMA" id="RNTENCL"/>
<dbReference type="OrthoDB" id="9537859at2759"/>
<dbReference type="PAN-GO" id="P0C5Y9">
    <property type="GO annotations" value="1 GO annotation based on evolutionary models"/>
</dbReference>
<dbReference type="PhylomeDB" id="P0C5Y9"/>
<dbReference type="TreeFam" id="TF300137"/>
<dbReference type="PathwayCommons" id="P0C5Y9"/>
<dbReference type="Reactome" id="R-HSA-110328">
    <property type="pathway name" value="Recognition and association of DNA glycosylase with site containing an affected pyrimidine"/>
</dbReference>
<dbReference type="Reactome" id="R-HSA-110329">
    <property type="pathway name" value="Cleavage of the damaged pyrimidine"/>
</dbReference>
<dbReference type="Reactome" id="R-HSA-110330">
    <property type="pathway name" value="Recognition and association of DNA glycosylase with site containing an affected purine"/>
</dbReference>
<dbReference type="Reactome" id="R-HSA-110331">
    <property type="pathway name" value="Cleavage of the damaged purine"/>
</dbReference>
<dbReference type="Reactome" id="R-HSA-1221632">
    <property type="pathway name" value="Meiotic synapsis"/>
</dbReference>
<dbReference type="Reactome" id="R-HSA-171306">
    <property type="pathway name" value="Packaging Of Telomere Ends"/>
</dbReference>
<dbReference type="Reactome" id="R-HSA-1912408">
    <property type="pathway name" value="Pre-NOTCH Transcription and Translation"/>
</dbReference>
<dbReference type="Reactome" id="R-HSA-201722">
    <property type="pathway name" value="Formation of the beta-catenin:TCF transactivating complex"/>
</dbReference>
<dbReference type="Reactome" id="R-HSA-212300">
    <property type="pathway name" value="PRC2 methylates histones and DNA"/>
</dbReference>
<dbReference type="Reactome" id="R-HSA-2299718">
    <property type="pathway name" value="Condensation of Prophase Chromosomes"/>
</dbReference>
<dbReference type="Reactome" id="R-HSA-2559580">
    <property type="pathway name" value="Oxidative Stress Induced Senescence"/>
</dbReference>
<dbReference type="Reactome" id="R-HSA-2559582">
    <property type="pathway name" value="Senescence-Associated Secretory Phenotype (SASP)"/>
</dbReference>
<dbReference type="Reactome" id="R-HSA-2559586">
    <property type="pathway name" value="DNA Damage/Telomere Stress Induced Senescence"/>
</dbReference>
<dbReference type="Reactome" id="R-HSA-3214858">
    <property type="pathway name" value="RMTs methylate histone arginines"/>
</dbReference>
<dbReference type="Reactome" id="R-HSA-427359">
    <property type="pathway name" value="SIRT1 negatively regulates rRNA expression"/>
</dbReference>
<dbReference type="Reactome" id="R-HSA-427389">
    <property type="pathway name" value="ERCC6 (CSB) and EHMT2 (G9a) positively regulate rRNA expression"/>
</dbReference>
<dbReference type="Reactome" id="R-HSA-427413">
    <property type="pathway name" value="NoRC negatively regulates rRNA expression"/>
</dbReference>
<dbReference type="Reactome" id="R-HSA-5250924">
    <property type="pathway name" value="B-WICH complex positively regulates rRNA expression"/>
</dbReference>
<dbReference type="Reactome" id="R-HSA-5334118">
    <property type="pathway name" value="DNA methylation"/>
</dbReference>
<dbReference type="Reactome" id="R-HSA-5578749">
    <property type="pathway name" value="Transcriptional regulation by small RNAs"/>
</dbReference>
<dbReference type="Reactome" id="R-HSA-5617472">
    <property type="pathway name" value="Activation of anterior HOX genes in hindbrain development during early embryogenesis"/>
</dbReference>
<dbReference type="Reactome" id="R-HSA-5625886">
    <property type="pathway name" value="Activated PKN1 stimulates transcription of AR (androgen receptor) regulated genes KLK2 and KLK3"/>
</dbReference>
<dbReference type="Reactome" id="R-HSA-606279">
    <property type="pathway name" value="Deposition of new CENPA-containing nucleosomes at the centromere"/>
</dbReference>
<dbReference type="Reactome" id="R-HSA-68616">
    <property type="pathway name" value="Assembly of the ORC complex at the origin of replication"/>
</dbReference>
<dbReference type="Reactome" id="R-HSA-73728">
    <property type="pathway name" value="RNA Polymerase I Promoter Opening"/>
</dbReference>
<dbReference type="Reactome" id="R-HSA-73772">
    <property type="pathway name" value="RNA Polymerase I Promoter Escape"/>
</dbReference>
<dbReference type="Reactome" id="R-HSA-8936459">
    <property type="pathway name" value="RUNX1 regulates genes involved in megakaryocyte differentiation and platelet function"/>
</dbReference>
<dbReference type="Reactome" id="R-HSA-8939236">
    <property type="pathway name" value="RUNX1 regulates transcription of genes involved in differentiation of HSCs"/>
</dbReference>
<dbReference type="Reactome" id="R-HSA-9018519">
    <property type="pathway name" value="Estrogen-dependent gene expression"/>
</dbReference>
<dbReference type="Reactome" id="R-HSA-912446">
    <property type="pathway name" value="Meiotic recombination"/>
</dbReference>
<dbReference type="Reactome" id="R-HSA-9616222">
    <property type="pathway name" value="Transcriptional regulation of granulopoiesis"/>
</dbReference>
<dbReference type="Reactome" id="R-HSA-9670095">
    <property type="pathway name" value="Inhibition of DNA recombination at telomere"/>
</dbReference>
<dbReference type="Reactome" id="R-HSA-9710421">
    <property type="pathway name" value="Defective pyroptosis"/>
</dbReference>
<dbReference type="Reactome" id="R-HSA-977225">
    <property type="pathway name" value="Amyloid fiber formation"/>
</dbReference>
<dbReference type="Reactome" id="R-HSA-9821002">
    <property type="pathway name" value="Chromatin modifications during the maternal to zygotic transition (MZT)"/>
</dbReference>
<dbReference type="Reactome" id="R-HSA-9841922">
    <property type="pathway name" value="MLL4 and MLL3 complexes regulate expression of PPARG target genes in adipogenesis and hepatic steatosis"/>
</dbReference>
<dbReference type="Reactome" id="R-HSA-9843940">
    <property type="pathway name" value="Regulation of endogenous retroelements by KRAB-ZFP proteins"/>
</dbReference>
<dbReference type="Reactome" id="R-HSA-9843970">
    <property type="pathway name" value="Regulation of endogenous retroelements by the Human Silencing Hub (HUSH) complex"/>
</dbReference>
<dbReference type="Reactome" id="R-HSA-9845323">
    <property type="pathway name" value="Regulation of endogenous retroelements by Piwi-interacting RNAs (piRNAs)"/>
</dbReference>
<dbReference type="SIGNOR" id="P0C5Y9"/>
<dbReference type="BioGRID-ORCS" id="474382">
    <property type="hits" value="100 hits in 637 CRISPR screens"/>
</dbReference>
<dbReference type="GeneWiki" id="H2AFB1"/>
<dbReference type="GenomeRNAi" id="474382"/>
<dbReference type="Pharos" id="P0C5Y9">
    <property type="development level" value="Tbio"/>
</dbReference>
<dbReference type="PRO" id="PR:P0C5Y9"/>
<dbReference type="Proteomes" id="UP000005640">
    <property type="component" value="Chromosome X"/>
</dbReference>
<dbReference type="RNAct" id="P0C5Y9">
    <property type="molecule type" value="protein"/>
</dbReference>
<dbReference type="Bgee" id="ENSG00000274183">
    <property type="expression patterns" value="Expressed in male germ line stem cell (sensu Vertebrata) in testis and 86 other cell types or tissues"/>
</dbReference>
<dbReference type="GO" id="GO:0000791">
    <property type="term" value="C:euchromatin"/>
    <property type="evidence" value="ECO:0000314"/>
    <property type="project" value="UniProtKB"/>
</dbReference>
<dbReference type="GO" id="GO:0000786">
    <property type="term" value="C:nucleosome"/>
    <property type="evidence" value="ECO:0000314"/>
    <property type="project" value="UniProtKB"/>
</dbReference>
<dbReference type="GO" id="GO:0005634">
    <property type="term" value="C:nucleus"/>
    <property type="evidence" value="ECO:0007005"/>
    <property type="project" value="UniProtKB"/>
</dbReference>
<dbReference type="GO" id="GO:0003677">
    <property type="term" value="F:DNA binding"/>
    <property type="evidence" value="ECO:0007669"/>
    <property type="project" value="UniProtKB-KW"/>
</dbReference>
<dbReference type="GO" id="GO:0046982">
    <property type="term" value="F:protein heterodimerization activity"/>
    <property type="evidence" value="ECO:0007669"/>
    <property type="project" value="InterPro"/>
</dbReference>
<dbReference type="GO" id="GO:0030527">
    <property type="term" value="F:structural constituent of chromatin"/>
    <property type="evidence" value="ECO:0000318"/>
    <property type="project" value="GO_Central"/>
</dbReference>
<dbReference type="GO" id="GO:0031507">
    <property type="term" value="P:heterochromatin formation"/>
    <property type="evidence" value="ECO:0000318"/>
    <property type="project" value="GO_Central"/>
</dbReference>
<dbReference type="GO" id="GO:0006397">
    <property type="term" value="P:mRNA processing"/>
    <property type="evidence" value="ECO:0000315"/>
    <property type="project" value="UniProtKB"/>
</dbReference>
<dbReference type="GO" id="GO:0006334">
    <property type="term" value="P:nucleosome assembly"/>
    <property type="evidence" value="ECO:0000314"/>
    <property type="project" value="UniProtKB"/>
</dbReference>
<dbReference type="CDD" id="cd00074">
    <property type="entry name" value="HFD_H2A"/>
    <property type="match status" value="1"/>
</dbReference>
<dbReference type="FunFam" id="1.10.20.10:FF:000097">
    <property type="entry name" value="Histone H2A"/>
    <property type="match status" value="1"/>
</dbReference>
<dbReference type="Gene3D" id="1.10.20.10">
    <property type="entry name" value="Histone, subunit A"/>
    <property type="match status" value="1"/>
</dbReference>
<dbReference type="InterPro" id="IPR009072">
    <property type="entry name" value="Histone-fold"/>
</dbReference>
<dbReference type="InterPro" id="IPR002119">
    <property type="entry name" value="Histone_H2A"/>
</dbReference>
<dbReference type="PANTHER" id="PTHR23430">
    <property type="entry name" value="HISTONE H2A"/>
    <property type="match status" value="1"/>
</dbReference>
<dbReference type="PRINTS" id="PR00620">
    <property type="entry name" value="HISTONEH2A"/>
</dbReference>
<dbReference type="SMART" id="SM00414">
    <property type="entry name" value="H2A"/>
    <property type="match status" value="1"/>
</dbReference>
<dbReference type="SUPFAM" id="SSF47113">
    <property type="entry name" value="Histone-fold"/>
    <property type="match status" value="1"/>
</dbReference>
<name>H2AB1_HUMAN</name>
<gene>
    <name evidence="15" type="primary">H2AB1</name>
    <name evidence="15" type="synonym">H2AFB1</name>
</gene>
<sequence>MPRRRRRRGSSGAGGRGRTCSRTVRAELSFSVSQVERSLREGHYAQRLSRTAPVYLAAVIEYLTAKVPELAGNEAQNSGERNITPLLLDMVVHNDRLLSTLFNTTTISQVAPGED</sequence>
<comment type="function">
    <text evidence="2 3 4 5 6 7 9 10 11">Atypical histone H2A which can replace conventional H2A in some nucleosomes and is associated with active transcription and mRNA processing (PubMed:22795134). Nucleosomes wrap and compact DNA into chromatin, limiting DNA accessibility to the cellular machineries which require DNA as a template. Histones thereby play a central role in transcription regulation, DNA repair, DNA replication and chromosomal stability (PubMed:15257289, PubMed:16287874, PubMed:16957777, PubMed:17591702, PubMed:17726088, PubMed:18329190, PubMed:22795134). Nucleosomes containing this histone are less rigid and organize less DNA than canonical nucleosomes in vivo (PubMed:15257289, PubMed:16957777, PubMed:17591702, PubMed:24336483). They are enriched in actively transcribed genes and associate with the elongating form of RNA polymerase (PubMed:17591702, PubMed:24753410). They associate with spliceosome components and are required for mRNA splicing (PubMed:22795134).</text>
</comment>
<comment type="subunit">
    <text evidence="2 4">The nucleosome is a histone octamer containing two molecules each of H2A, H2B, H3 and H4 assembled in one H3-H4 heterotetramer and two H2A-H2B heterodimers. May be incorporated into a proportion of nucleosomes, replacing one or more H2A molecules.</text>
</comment>
<comment type="subcellular location">
    <subcellularLocation>
        <location evidence="8 10">Nucleus</location>
    </subcellularLocation>
    <subcellularLocation>
        <location evidence="8 9 10">Chromosome</location>
    </subcellularLocation>
    <text evidence="8">Associated with the active X chromosome and with autosomes, while it is absent from the inactive X chromosome and excluded from Barr bodies.</text>
</comment>
<comment type="tissue specificity">
    <text evidence="8">Present in mature sperm.</text>
</comment>
<comment type="domain">
    <text evidence="2">The docking domain is responsible for the weaker heterodimerization with H2B.</text>
</comment>
<comment type="miscellaneous">
    <text evidence="14">In contrast to other H2A histones, it does not contain the conserved residues that are the target of post-translational modifications.</text>
</comment>
<comment type="similarity">
    <text evidence="14">Belongs to the histone H2A family.</text>
</comment>
<comment type="caution">
    <text evidence="9">Although related to histone H2AB1 in mouse (AC Q9CQ70), it is unclear whether human and mouse H2AB1 proteins are involved in similar processes. In mouse, histone H2AB1 is specifically required to direct the transformation of dissociating nucleosomes to protamine in male germ cells during spermatogenesis. It is however unclear whether human protein, which participates in mRNA processing and is associated with active transcription, is also involved in nucleosomes to protamine replacement (PubMed:22795134).</text>
</comment>
<comment type="online information" name="Wikipedia">
    <link uri="https://en.wikipedia.org/wiki/Histone_H2A"/>
    <text>Histone H2A entry</text>
</comment>
<feature type="chain" id="PRO_0000312805" description="Histone H2A-Bbd type 1">
    <location>
        <begin position="1"/>
        <end position="115"/>
    </location>
</feature>
<feature type="region of interest" description="Disordered" evidence="1">
    <location>
        <begin position="1"/>
        <end position="21"/>
    </location>
</feature>
<feature type="region of interest" description="Docking domain" evidence="2">
    <location>
        <begin position="87"/>
        <end position="115"/>
    </location>
</feature>
<feature type="sequence conflict" description="In Ref. 4; AAI28035." evidence="14" ref="4">
    <original>Q</original>
    <variation>K</variation>
    <location>
        <position position="109"/>
    </location>
</feature>
<proteinExistence type="evidence at protein level"/>
<organism>
    <name type="scientific">Homo sapiens</name>
    <name type="common">Human</name>
    <dbReference type="NCBI Taxonomy" id="9606"/>
    <lineage>
        <taxon>Eukaryota</taxon>
        <taxon>Metazoa</taxon>
        <taxon>Chordata</taxon>
        <taxon>Craniata</taxon>
        <taxon>Vertebrata</taxon>
        <taxon>Euteleostomi</taxon>
        <taxon>Mammalia</taxon>
        <taxon>Eutheria</taxon>
        <taxon>Euarchontoglires</taxon>
        <taxon>Primates</taxon>
        <taxon>Haplorrhini</taxon>
        <taxon>Catarrhini</taxon>
        <taxon>Hominidae</taxon>
        <taxon>Homo</taxon>
    </lineage>
</organism>
<protein>
    <recommendedName>
        <fullName evidence="14">Histone H2A-Bbd type 1</fullName>
    </recommendedName>
    <alternativeName>
        <fullName evidence="12">H2A Barr body-deficient</fullName>
        <shortName evidence="13">H2A.B</shortName>
        <shortName evidence="12">H2A.Bbd</shortName>
    </alternativeName>
</protein>